<reference key="1">
    <citation type="journal article" date="2009" name="J. Bacteriol.">
        <title>Genomic sequencing reveals regulatory mutations and recombinational events in the widely used MC4100 lineage of Escherichia coli K-12.</title>
        <authorList>
            <person name="Ferenci T."/>
            <person name="Zhou Z."/>
            <person name="Betteridge T."/>
            <person name="Ren Y."/>
            <person name="Liu Y."/>
            <person name="Feng L."/>
            <person name="Reeves P.R."/>
            <person name="Wang L."/>
        </authorList>
    </citation>
    <scope>NUCLEOTIDE SEQUENCE [LARGE SCALE GENOMIC DNA]</scope>
    <source>
        <strain>K12 / MC4100 / BW2952</strain>
    </source>
</reference>
<name>PEPE_ECOBW</name>
<gene>
    <name evidence="1" type="primary">pepE</name>
    <name type="ordered locus">BWG_3677</name>
</gene>
<accession>C5A0V8</accession>
<protein>
    <recommendedName>
        <fullName evidence="1">Peptidase E</fullName>
        <ecNumber evidence="1">3.4.13.21</ecNumber>
    </recommendedName>
    <alternativeName>
        <fullName evidence="1">Alpha-aspartyl dipeptidase</fullName>
    </alternativeName>
    <alternativeName>
        <fullName evidence="1">Asp-specific dipeptidase</fullName>
    </alternativeName>
    <alternativeName>
        <fullName evidence="1">Dipeptidase E</fullName>
    </alternativeName>
</protein>
<evidence type="ECO:0000255" key="1">
    <source>
        <dbReference type="HAMAP-Rule" id="MF_00510"/>
    </source>
</evidence>
<comment type="function">
    <text evidence="1">Hydrolyzes dipeptides containing N-terminal aspartate residues. May play a role in allowing the cell to use peptide aspartate to spare carbon otherwise required for the synthesis of the aspartate family of amino acids.</text>
</comment>
<comment type="catalytic activity">
    <reaction evidence="1">
        <text>Dipeptidase E catalyzes the hydrolysis of dipeptides Asp-|-Xaa. It does not act on peptides with N-terminal Glu, Asn or Gln, nor does it cleave isoaspartyl peptides.</text>
        <dbReference type="EC" id="3.4.13.21"/>
    </reaction>
</comment>
<comment type="subcellular location">
    <subcellularLocation>
        <location evidence="1">Cytoplasm</location>
    </subcellularLocation>
</comment>
<comment type="similarity">
    <text evidence="1">Belongs to the peptidase S51 family.</text>
</comment>
<feature type="chain" id="PRO_1000206613" description="Peptidase E">
    <location>
        <begin position="1"/>
        <end position="229"/>
    </location>
</feature>
<feature type="active site" description="Charge relay system" evidence="1">
    <location>
        <position position="120"/>
    </location>
</feature>
<feature type="active site" description="Charge relay system" evidence="1">
    <location>
        <position position="135"/>
    </location>
</feature>
<feature type="active site" description="Charge relay system" evidence="1">
    <location>
        <position position="157"/>
    </location>
</feature>
<proteinExistence type="inferred from homology"/>
<organism>
    <name type="scientific">Escherichia coli (strain K12 / MC4100 / BW2952)</name>
    <dbReference type="NCBI Taxonomy" id="595496"/>
    <lineage>
        <taxon>Bacteria</taxon>
        <taxon>Pseudomonadati</taxon>
        <taxon>Pseudomonadota</taxon>
        <taxon>Gammaproteobacteria</taxon>
        <taxon>Enterobacterales</taxon>
        <taxon>Enterobacteriaceae</taxon>
        <taxon>Escherichia</taxon>
    </lineage>
</organism>
<sequence length="229" mass="24570">MELLLLSNSTLPGKAWLEHALPLIAEQLQGRRSAVFIPFAGVTQTWDDYTAKTAAVLAPLGVSVTGIHSVVDPVAAIENAEIVIVGGGNTFQLLKQCRERGLLAPITDVVKRGALYIGWSAGANLACPTIRTTNDMPIVDPQGFDALNLFPLQINPHFTNALPEGHKGETREQRIRELLVVAPELTIIGLPEGNWITVSKGHATLGGPNTTYVFKAGEEAVPLEAGHRF</sequence>
<keyword id="KW-0963">Cytoplasm</keyword>
<keyword id="KW-0224">Dipeptidase</keyword>
<keyword id="KW-0378">Hydrolase</keyword>
<keyword id="KW-0645">Protease</keyword>
<keyword id="KW-0720">Serine protease</keyword>
<dbReference type="EC" id="3.4.13.21" evidence="1"/>
<dbReference type="EMBL" id="CP001396">
    <property type="protein sequence ID" value="ACR61724.1"/>
    <property type="molecule type" value="Genomic_DNA"/>
</dbReference>
<dbReference type="RefSeq" id="WP_000421763.1">
    <property type="nucleotide sequence ID" value="NC_012759.1"/>
</dbReference>
<dbReference type="SMR" id="C5A0V8"/>
<dbReference type="MEROPS" id="S51.001"/>
<dbReference type="GeneID" id="93777874"/>
<dbReference type="KEGG" id="ebw:BWG_3677"/>
<dbReference type="HOGENOM" id="CLU_071689_0_0_6"/>
<dbReference type="GO" id="GO:0005737">
    <property type="term" value="C:cytoplasm"/>
    <property type="evidence" value="ECO:0007669"/>
    <property type="project" value="UniProtKB-SubCell"/>
</dbReference>
<dbReference type="GO" id="GO:0016805">
    <property type="term" value="F:dipeptidase activity"/>
    <property type="evidence" value="ECO:0007669"/>
    <property type="project" value="UniProtKB-UniRule"/>
</dbReference>
<dbReference type="GO" id="GO:0008236">
    <property type="term" value="F:serine-type peptidase activity"/>
    <property type="evidence" value="ECO:0007669"/>
    <property type="project" value="UniProtKB-KW"/>
</dbReference>
<dbReference type="GO" id="GO:0006508">
    <property type="term" value="P:proteolysis"/>
    <property type="evidence" value="ECO:0007669"/>
    <property type="project" value="UniProtKB-UniRule"/>
</dbReference>
<dbReference type="CDD" id="cd03146">
    <property type="entry name" value="GAT1_Peptidase_E"/>
    <property type="match status" value="1"/>
</dbReference>
<dbReference type="FunFam" id="3.40.50.880:FF:000007">
    <property type="entry name" value="Peptidase E"/>
    <property type="match status" value="1"/>
</dbReference>
<dbReference type="Gene3D" id="3.40.50.880">
    <property type="match status" value="1"/>
</dbReference>
<dbReference type="HAMAP" id="MF_00510">
    <property type="entry name" value="Peptidase_E"/>
    <property type="match status" value="1"/>
</dbReference>
<dbReference type="InterPro" id="IPR029062">
    <property type="entry name" value="Class_I_gatase-like"/>
</dbReference>
<dbReference type="InterPro" id="IPR005320">
    <property type="entry name" value="Peptidase_S51"/>
</dbReference>
<dbReference type="InterPro" id="IPR023172">
    <property type="entry name" value="Peptidase_S51_dipeptidase-E"/>
</dbReference>
<dbReference type="NCBIfam" id="NF003642">
    <property type="entry name" value="PRK05282.1"/>
    <property type="match status" value="1"/>
</dbReference>
<dbReference type="PANTHER" id="PTHR20842:SF0">
    <property type="entry name" value="ALPHA-ASPARTYL DIPEPTIDASE"/>
    <property type="match status" value="1"/>
</dbReference>
<dbReference type="PANTHER" id="PTHR20842">
    <property type="entry name" value="PROTEASE S51 ALPHA-ASPARTYL DIPEPTIDASE"/>
    <property type="match status" value="1"/>
</dbReference>
<dbReference type="Pfam" id="PF03575">
    <property type="entry name" value="Peptidase_S51"/>
    <property type="match status" value="1"/>
</dbReference>
<dbReference type="SUPFAM" id="SSF52317">
    <property type="entry name" value="Class I glutamine amidotransferase-like"/>
    <property type="match status" value="1"/>
</dbReference>